<feature type="chain" id="PRO_0000442933" description="Uncharacterized protein C10orf143">
    <location>
        <begin position="1"/>
        <end position="108"/>
    </location>
</feature>
<feature type="region of interest" description="Disordered" evidence="1">
    <location>
        <begin position="56"/>
        <end position="108"/>
    </location>
</feature>
<feature type="compositionally biased region" description="Polar residues" evidence="1">
    <location>
        <begin position="73"/>
        <end position="89"/>
    </location>
</feature>
<keyword id="KW-1185">Reference proteome</keyword>
<proteinExistence type="predicted"/>
<dbReference type="EMBL" id="AL139123">
    <property type="status" value="NOT_ANNOTATED_CDS"/>
    <property type="molecule type" value="Genomic_DNA"/>
</dbReference>
<dbReference type="EMBL" id="KF455300">
    <property type="status" value="NOT_ANNOTATED_CDS"/>
    <property type="molecule type" value="Genomic_DNA"/>
</dbReference>
<dbReference type="EMBL" id="CH471066">
    <property type="protein sequence ID" value="EAW49156.1"/>
    <property type="molecule type" value="Genomic_DNA"/>
</dbReference>
<dbReference type="CCDS" id="CCDS86157.1"/>
<dbReference type="RefSeq" id="NP_001341971.1">
    <property type="nucleotide sequence ID" value="NM_001355042.2"/>
</dbReference>
<dbReference type="FunCoup" id="A0A1B0GUT2">
    <property type="interactions" value="15"/>
</dbReference>
<dbReference type="STRING" id="9606.ENSP00000490233"/>
<dbReference type="BioMuta" id="C10orf143"/>
<dbReference type="PeptideAtlas" id="A0A1B0GUT2"/>
<dbReference type="Ensembl" id="ENST00000637128.2">
    <property type="protein sequence ID" value="ENSP00000490233.1"/>
    <property type="gene ID" value="ENSG00000237489.5"/>
</dbReference>
<dbReference type="GeneID" id="387723"/>
<dbReference type="MANE-Select" id="ENST00000637128.2">
    <property type="protein sequence ID" value="ENSP00000490233.1"/>
    <property type="RefSeq nucleotide sequence ID" value="NM_001355042.2"/>
    <property type="RefSeq protein sequence ID" value="NP_001341971.1"/>
</dbReference>
<dbReference type="AGR" id="HGNC:48677"/>
<dbReference type="GeneCards" id="C10orf143"/>
<dbReference type="HGNC" id="HGNC:48677">
    <property type="gene designation" value="C10orf143"/>
</dbReference>
<dbReference type="HPA" id="ENSG00000237489">
    <property type="expression patterns" value="Low tissue specificity"/>
</dbReference>
<dbReference type="neXtProt" id="NX_A0A1B0GUT2"/>
<dbReference type="OpenTargets" id="ENSG00000237489"/>
<dbReference type="VEuPathDB" id="HostDB:ENSG00000237489"/>
<dbReference type="GeneTree" id="ENSGT01130000278369"/>
<dbReference type="InParanoid" id="A0A1B0GUT2"/>
<dbReference type="OMA" id="CHPVNAC"/>
<dbReference type="OrthoDB" id="5955292at2759"/>
<dbReference type="PAN-GO" id="A0A1B0GUT2">
    <property type="GO annotations" value="0 GO annotations based on evolutionary models"/>
</dbReference>
<dbReference type="Pharos" id="A0A1B0GUT2">
    <property type="development level" value="Tdark"/>
</dbReference>
<dbReference type="PRO" id="PR:A0A1B0GUT2"/>
<dbReference type="Proteomes" id="UP000005640">
    <property type="component" value="Chromosome 10"/>
</dbReference>
<dbReference type="RNAct" id="A0A1B0GUT2">
    <property type="molecule type" value="protein"/>
</dbReference>
<dbReference type="Bgee" id="ENSG00000237489">
    <property type="expression patterns" value="Expressed in sperm and 143 other cell types or tissues"/>
</dbReference>
<dbReference type="ExpressionAtlas" id="A0A1B0GUT2">
    <property type="expression patterns" value="baseline and differential"/>
</dbReference>
<organism>
    <name type="scientific">Homo sapiens</name>
    <name type="common">Human</name>
    <dbReference type="NCBI Taxonomy" id="9606"/>
    <lineage>
        <taxon>Eukaryota</taxon>
        <taxon>Metazoa</taxon>
        <taxon>Chordata</taxon>
        <taxon>Craniata</taxon>
        <taxon>Vertebrata</taxon>
        <taxon>Euteleostomi</taxon>
        <taxon>Mammalia</taxon>
        <taxon>Eutheria</taxon>
        <taxon>Euarchontoglires</taxon>
        <taxon>Primates</taxon>
        <taxon>Haplorrhini</taxon>
        <taxon>Catarrhini</taxon>
        <taxon>Hominidae</taxon>
        <taxon>Homo</taxon>
    </lineage>
</organism>
<evidence type="ECO:0000256" key="1">
    <source>
        <dbReference type="SAM" id="MobiDB-lite"/>
    </source>
</evidence>
<evidence type="ECO:0000305" key="2"/>
<evidence type="ECO:0000312" key="3">
    <source>
        <dbReference type="HGNC" id="HGNC:48677"/>
    </source>
</evidence>
<sequence>MDSLALGRWRQRRAEDLQVPGDVKRVCRRLEASGHERGCHQVNACALASWGPEDRELPSRGCLPAPRPESGQGRLSTGISQNGGRSSAQPCPRCIAGESGHFSHTKNH</sequence>
<gene>
    <name evidence="3" type="primary">C10orf143</name>
</gene>
<reference key="1">
    <citation type="journal article" date="2004" name="Nature">
        <title>The DNA sequence and comparative analysis of human chromosome 10.</title>
        <authorList>
            <person name="Deloukas P."/>
            <person name="Earthrowl M.E."/>
            <person name="Grafham D.V."/>
            <person name="Rubenfield M."/>
            <person name="French L."/>
            <person name="Steward C.A."/>
            <person name="Sims S.K."/>
            <person name="Jones M.C."/>
            <person name="Searle S."/>
            <person name="Scott C."/>
            <person name="Howe K."/>
            <person name="Hunt S.E."/>
            <person name="Andrews T.D."/>
            <person name="Gilbert J.G.R."/>
            <person name="Swarbreck D."/>
            <person name="Ashurst J.L."/>
            <person name="Taylor A."/>
            <person name="Battles J."/>
            <person name="Bird C.P."/>
            <person name="Ainscough R."/>
            <person name="Almeida J.P."/>
            <person name="Ashwell R.I.S."/>
            <person name="Ambrose K.D."/>
            <person name="Babbage A.K."/>
            <person name="Bagguley C.L."/>
            <person name="Bailey J."/>
            <person name="Banerjee R."/>
            <person name="Bates K."/>
            <person name="Beasley H."/>
            <person name="Bray-Allen S."/>
            <person name="Brown A.J."/>
            <person name="Brown J.Y."/>
            <person name="Burford D.C."/>
            <person name="Burrill W."/>
            <person name="Burton J."/>
            <person name="Cahill P."/>
            <person name="Camire D."/>
            <person name="Carter N.P."/>
            <person name="Chapman J.C."/>
            <person name="Clark S.Y."/>
            <person name="Clarke G."/>
            <person name="Clee C.M."/>
            <person name="Clegg S."/>
            <person name="Corby N."/>
            <person name="Coulson A."/>
            <person name="Dhami P."/>
            <person name="Dutta I."/>
            <person name="Dunn M."/>
            <person name="Faulkner L."/>
            <person name="Frankish A."/>
            <person name="Frankland J.A."/>
            <person name="Garner P."/>
            <person name="Garnett J."/>
            <person name="Gribble S."/>
            <person name="Griffiths C."/>
            <person name="Grocock R."/>
            <person name="Gustafson E."/>
            <person name="Hammond S."/>
            <person name="Harley J.L."/>
            <person name="Hart E."/>
            <person name="Heath P.D."/>
            <person name="Ho T.P."/>
            <person name="Hopkins B."/>
            <person name="Horne J."/>
            <person name="Howden P.J."/>
            <person name="Huckle E."/>
            <person name="Hynds C."/>
            <person name="Johnson C."/>
            <person name="Johnson D."/>
            <person name="Kana A."/>
            <person name="Kay M."/>
            <person name="Kimberley A.M."/>
            <person name="Kershaw J.K."/>
            <person name="Kokkinaki M."/>
            <person name="Laird G.K."/>
            <person name="Lawlor S."/>
            <person name="Lee H.M."/>
            <person name="Leongamornlert D.A."/>
            <person name="Laird G."/>
            <person name="Lloyd C."/>
            <person name="Lloyd D.M."/>
            <person name="Loveland J."/>
            <person name="Lovell J."/>
            <person name="McLaren S."/>
            <person name="McLay K.E."/>
            <person name="McMurray A."/>
            <person name="Mashreghi-Mohammadi M."/>
            <person name="Matthews L."/>
            <person name="Milne S."/>
            <person name="Nickerson T."/>
            <person name="Nguyen M."/>
            <person name="Overton-Larty E."/>
            <person name="Palmer S.A."/>
            <person name="Pearce A.V."/>
            <person name="Peck A.I."/>
            <person name="Pelan S."/>
            <person name="Phillimore B."/>
            <person name="Porter K."/>
            <person name="Rice C.M."/>
            <person name="Rogosin A."/>
            <person name="Ross M.T."/>
            <person name="Sarafidou T."/>
            <person name="Sehra H.K."/>
            <person name="Shownkeen R."/>
            <person name="Skuce C.D."/>
            <person name="Smith M."/>
            <person name="Standring L."/>
            <person name="Sycamore N."/>
            <person name="Tester J."/>
            <person name="Thorpe A."/>
            <person name="Torcasso W."/>
            <person name="Tracey A."/>
            <person name="Tromans A."/>
            <person name="Tsolas J."/>
            <person name="Wall M."/>
            <person name="Walsh J."/>
            <person name="Wang H."/>
            <person name="Weinstock K."/>
            <person name="West A.P."/>
            <person name="Willey D.L."/>
            <person name="Whitehead S.L."/>
            <person name="Wilming L."/>
            <person name="Wray P.W."/>
            <person name="Young L."/>
            <person name="Chen Y."/>
            <person name="Lovering R.C."/>
            <person name="Moschonas N.K."/>
            <person name="Siebert R."/>
            <person name="Fechtel K."/>
            <person name="Bentley D."/>
            <person name="Durbin R.M."/>
            <person name="Hubbard T."/>
            <person name="Doucette-Stamm L."/>
            <person name="Beck S."/>
            <person name="Smith D.R."/>
            <person name="Rogers J."/>
        </authorList>
    </citation>
    <scope>NUCLEOTIDE SEQUENCE [LARGE SCALE GENOMIC DNA]</scope>
</reference>
<reference key="2">
    <citation type="submission" date="2005-09" db="EMBL/GenBank/DDBJ databases">
        <authorList>
            <person name="Mural R.J."/>
            <person name="Istrail S."/>
            <person name="Sutton G.G."/>
            <person name="Florea L."/>
            <person name="Halpern A.L."/>
            <person name="Mobarry C.M."/>
            <person name="Lippert R."/>
            <person name="Walenz B."/>
            <person name="Shatkay H."/>
            <person name="Dew I."/>
            <person name="Miller J.R."/>
            <person name="Flanigan M.J."/>
            <person name="Edwards N.J."/>
            <person name="Bolanos R."/>
            <person name="Fasulo D."/>
            <person name="Halldorsson B.V."/>
            <person name="Hannenhalli S."/>
            <person name="Turner R."/>
            <person name="Yooseph S."/>
            <person name="Lu F."/>
            <person name="Nusskern D.R."/>
            <person name="Shue B.C."/>
            <person name="Zheng X.H."/>
            <person name="Zhong F."/>
            <person name="Delcher A.L."/>
            <person name="Huson D.H."/>
            <person name="Kravitz S.A."/>
            <person name="Mouchard L."/>
            <person name="Reinert K."/>
            <person name="Remington K.A."/>
            <person name="Clark A.G."/>
            <person name="Waterman M.S."/>
            <person name="Eichler E.E."/>
            <person name="Adams M.D."/>
            <person name="Hunkapiller M.W."/>
            <person name="Myers E.W."/>
            <person name="Venter J.C."/>
        </authorList>
    </citation>
    <scope>NUCLEOTIDE SEQUENCE [LARGE SCALE GENOMIC DNA]</scope>
</reference>
<protein>
    <recommendedName>
        <fullName evidence="2">Uncharacterized protein C10orf143</fullName>
    </recommendedName>
</protein>
<name>CJ143_HUMAN</name>
<accession>A0A1B0GUT2</accession>